<name>FLIO_SALTY</name>
<gene>
    <name type="primary">fliO</name>
    <name type="synonym">flaP</name>
    <name type="synonym">flbD</name>
    <name type="ordered locus">STM1978</name>
</gene>
<proteinExistence type="evidence at protein level"/>
<dbReference type="EMBL" id="L49021">
    <property type="protein sequence ID" value="AAB81318.1"/>
    <property type="molecule type" value="Genomic_DNA"/>
</dbReference>
<dbReference type="EMBL" id="AE006468">
    <property type="protein sequence ID" value="AAL20890.1"/>
    <property type="molecule type" value="Genomic_DNA"/>
</dbReference>
<dbReference type="PIR" id="S78697">
    <property type="entry name" value="S78697"/>
</dbReference>
<dbReference type="RefSeq" id="NP_460931.3">
    <property type="nucleotide sequence ID" value="NC_003197.2"/>
</dbReference>
<dbReference type="RefSeq" id="WP_000978276.1">
    <property type="nucleotide sequence ID" value="NC_003197.2"/>
</dbReference>
<dbReference type="SMR" id="P0A1L1"/>
<dbReference type="STRING" id="99287.STM1978"/>
<dbReference type="TCDB" id="3.A.6.2.1">
    <property type="family name" value="the type iii (virulence-related) secretory pathway (iiisp) family"/>
</dbReference>
<dbReference type="PaxDb" id="99287-STM1978"/>
<dbReference type="GeneID" id="1253499"/>
<dbReference type="KEGG" id="stm:STM1978"/>
<dbReference type="HOGENOM" id="CLU_113213_1_0_6"/>
<dbReference type="OMA" id="QNLVKRP"/>
<dbReference type="PhylomeDB" id="P0A1L1"/>
<dbReference type="BioCyc" id="SENT99287:STM1978-MONOMER"/>
<dbReference type="Proteomes" id="UP000001014">
    <property type="component" value="Chromosome"/>
</dbReference>
<dbReference type="GO" id="GO:0009425">
    <property type="term" value="C:bacterial-type flagellum basal body"/>
    <property type="evidence" value="ECO:0007669"/>
    <property type="project" value="UniProtKB-SubCell"/>
</dbReference>
<dbReference type="GO" id="GO:0005886">
    <property type="term" value="C:plasma membrane"/>
    <property type="evidence" value="ECO:0007669"/>
    <property type="project" value="UniProtKB-SubCell"/>
</dbReference>
<dbReference type="GO" id="GO:0097588">
    <property type="term" value="P:archaeal or bacterial-type flagellum-dependent cell motility"/>
    <property type="evidence" value="ECO:0007669"/>
    <property type="project" value="UniProtKB-KW"/>
</dbReference>
<dbReference type="GO" id="GO:0044781">
    <property type="term" value="P:bacterial-type flagellum organization"/>
    <property type="evidence" value="ECO:0007669"/>
    <property type="project" value="InterPro"/>
</dbReference>
<dbReference type="GO" id="GO:0006935">
    <property type="term" value="P:chemotaxis"/>
    <property type="evidence" value="ECO:0007669"/>
    <property type="project" value="UniProtKB-KW"/>
</dbReference>
<dbReference type="InterPro" id="IPR022781">
    <property type="entry name" value="Flagellar_biosynth_FliO"/>
</dbReference>
<dbReference type="InterPro" id="IPR052205">
    <property type="entry name" value="FliO/MopB"/>
</dbReference>
<dbReference type="NCBIfam" id="TIGR03500">
    <property type="entry name" value="FliO_TIGR"/>
    <property type="match status" value="1"/>
</dbReference>
<dbReference type="PANTHER" id="PTHR38766">
    <property type="entry name" value="FLAGELLAR PROTEIN FLIO"/>
    <property type="match status" value="1"/>
</dbReference>
<dbReference type="PANTHER" id="PTHR38766:SF1">
    <property type="entry name" value="FLAGELLAR PROTEIN FLIO"/>
    <property type="match status" value="1"/>
</dbReference>
<dbReference type="Pfam" id="PF04347">
    <property type="entry name" value="FliO"/>
    <property type="match status" value="1"/>
</dbReference>
<reference key="1">
    <citation type="journal article" date="1997" name="J. Bacteriol.">
        <title>The FliO, FliP, FliQ, and FliR proteins of Salmonella typhimurium: putative components for flagellar assembly.</title>
        <authorList>
            <person name="Ohnishi K."/>
            <person name="Fan F."/>
            <person name="Schoenhals G.J."/>
            <person name="Kihara M."/>
            <person name="Macnab R.M."/>
        </authorList>
    </citation>
    <scope>NUCLEOTIDE SEQUENCE [GENOMIC DNA]</scope>
    <scope>PROTEIN SEQUENCE OF 1-13</scope>
    <scope>CHARACTERIZATION</scope>
    <source>
        <strain>LT2</strain>
    </source>
</reference>
<reference key="2">
    <citation type="journal article" date="2001" name="Nature">
        <title>Complete genome sequence of Salmonella enterica serovar Typhimurium LT2.</title>
        <authorList>
            <person name="McClelland M."/>
            <person name="Sanderson K.E."/>
            <person name="Spieth J."/>
            <person name="Clifton S.W."/>
            <person name="Latreille P."/>
            <person name="Courtney L."/>
            <person name="Porwollik S."/>
            <person name="Ali J."/>
            <person name="Dante M."/>
            <person name="Du F."/>
            <person name="Hou S."/>
            <person name="Layman D."/>
            <person name="Leonard S."/>
            <person name="Nguyen C."/>
            <person name="Scott K."/>
            <person name="Holmes A."/>
            <person name="Grewal N."/>
            <person name="Mulvaney E."/>
            <person name="Ryan E."/>
            <person name="Sun H."/>
            <person name="Florea L."/>
            <person name="Miller W."/>
            <person name="Stoneking T."/>
            <person name="Nhan M."/>
            <person name="Waterston R."/>
            <person name="Wilson R.K."/>
        </authorList>
    </citation>
    <scope>NUCLEOTIDE SEQUENCE [LARGE SCALE GENOMIC DNA]</scope>
    <source>
        <strain>LT2 / SGSC1412 / ATCC 700720</strain>
    </source>
</reference>
<sequence>MMKTEATVSQPTAPAGSPLMQVSGALIGIIALILAAAWVIKRMGFAPKGNSVRGLKVSASASLGPRERVVIVEVENARLVLGVTASQINLLHTLPPAENDTEAPVAPPADFQNMMKSLLKRSGRS</sequence>
<feature type="chain" id="PRO_0000206845" description="Flagellar protein FliO">
    <location>
        <begin position="1"/>
        <end position="125"/>
    </location>
</feature>
<feature type="transmembrane region" description="Helical" evidence="2">
    <location>
        <begin position="20"/>
        <end position="40"/>
    </location>
</feature>
<accession>P0A1L1</accession>
<accession>P54699</accession>
<evidence type="ECO:0000250" key="1"/>
<evidence type="ECO:0000255" key="2"/>
<evidence type="ECO:0000305" key="3"/>
<keyword id="KW-0975">Bacterial flagellum</keyword>
<keyword id="KW-1003">Cell membrane</keyword>
<keyword id="KW-0145">Chemotaxis</keyword>
<keyword id="KW-0903">Direct protein sequencing</keyword>
<keyword id="KW-0283">Flagellar rotation</keyword>
<keyword id="KW-0472">Membrane</keyword>
<keyword id="KW-1185">Reference proteome</keyword>
<keyword id="KW-0812">Transmembrane</keyword>
<keyword id="KW-1133">Transmembrane helix</keyword>
<organism>
    <name type="scientific">Salmonella typhimurium (strain LT2 / SGSC1412 / ATCC 700720)</name>
    <dbReference type="NCBI Taxonomy" id="99287"/>
    <lineage>
        <taxon>Bacteria</taxon>
        <taxon>Pseudomonadati</taxon>
        <taxon>Pseudomonadota</taxon>
        <taxon>Gammaproteobacteria</taxon>
        <taxon>Enterobacterales</taxon>
        <taxon>Enterobacteriaceae</taxon>
        <taxon>Salmonella</taxon>
    </lineage>
</organism>
<comment type="subcellular location">
    <subcellularLocation>
        <location evidence="3">Cell membrane</location>
        <topology evidence="3">Single-pass membrane protein</topology>
    </subcellularLocation>
    <subcellularLocation>
        <location evidence="1">Bacterial flagellum basal body</location>
    </subcellularLocation>
</comment>
<comment type="similarity">
    <text evidence="3">Belongs to the FliO/MopB family.</text>
</comment>
<protein>
    <recommendedName>
        <fullName>Flagellar protein FliO</fullName>
    </recommendedName>
</protein>